<accession>B5XLG8</accession>
<name>REX_STRPZ</name>
<evidence type="ECO:0000255" key="1">
    <source>
        <dbReference type="HAMAP-Rule" id="MF_01131"/>
    </source>
</evidence>
<sequence length="214" mass="23827">MVIDKSIPKATAKRLSLYYRIFKRFHADQVEKASSKQIADAMGIDSATVRRDFSYFGELGRRGFGYDVTKLMNFFADLLNDHSTTNVILVGCGNIGRALLHYRFHDRNKMQIAMGFDTDDNALVGTKTADNIPVHGISSVKERIANTDIETAILTVPSIHAQEVTDQLIEAGIKGILSFAPVHLQVPKGVIVQSVDLTSELQTLLYFMNQNHLD</sequence>
<feature type="chain" id="PRO_1000137336" description="Redox-sensing transcriptional repressor Rex">
    <location>
        <begin position="1"/>
        <end position="214"/>
    </location>
</feature>
<feature type="DNA-binding region" description="H-T-H motif" evidence="1">
    <location>
        <begin position="17"/>
        <end position="56"/>
    </location>
</feature>
<feature type="binding site" evidence="1">
    <location>
        <begin position="91"/>
        <end position="96"/>
    </location>
    <ligand>
        <name>NAD(+)</name>
        <dbReference type="ChEBI" id="CHEBI:57540"/>
    </ligand>
</feature>
<organism>
    <name type="scientific">Streptococcus pyogenes serotype M49 (strain NZ131)</name>
    <dbReference type="NCBI Taxonomy" id="471876"/>
    <lineage>
        <taxon>Bacteria</taxon>
        <taxon>Bacillati</taxon>
        <taxon>Bacillota</taxon>
        <taxon>Bacilli</taxon>
        <taxon>Lactobacillales</taxon>
        <taxon>Streptococcaceae</taxon>
        <taxon>Streptococcus</taxon>
    </lineage>
</organism>
<protein>
    <recommendedName>
        <fullName evidence="1">Redox-sensing transcriptional repressor Rex</fullName>
    </recommendedName>
</protein>
<dbReference type="EMBL" id="CP000829">
    <property type="protein sequence ID" value="ACI61180.1"/>
    <property type="molecule type" value="Genomic_DNA"/>
</dbReference>
<dbReference type="SMR" id="B5XLG8"/>
<dbReference type="KEGG" id="soz:Spy49_0872c"/>
<dbReference type="HOGENOM" id="CLU_061534_1_1_9"/>
<dbReference type="Proteomes" id="UP000001039">
    <property type="component" value="Chromosome"/>
</dbReference>
<dbReference type="GO" id="GO:0005737">
    <property type="term" value="C:cytoplasm"/>
    <property type="evidence" value="ECO:0007669"/>
    <property type="project" value="UniProtKB-SubCell"/>
</dbReference>
<dbReference type="GO" id="GO:0003677">
    <property type="term" value="F:DNA binding"/>
    <property type="evidence" value="ECO:0007669"/>
    <property type="project" value="UniProtKB-UniRule"/>
</dbReference>
<dbReference type="GO" id="GO:0003700">
    <property type="term" value="F:DNA-binding transcription factor activity"/>
    <property type="evidence" value="ECO:0007669"/>
    <property type="project" value="UniProtKB-UniRule"/>
</dbReference>
<dbReference type="GO" id="GO:0045892">
    <property type="term" value="P:negative regulation of DNA-templated transcription"/>
    <property type="evidence" value="ECO:0007669"/>
    <property type="project" value="InterPro"/>
</dbReference>
<dbReference type="GO" id="GO:0051775">
    <property type="term" value="P:response to redox state"/>
    <property type="evidence" value="ECO:0007669"/>
    <property type="project" value="InterPro"/>
</dbReference>
<dbReference type="Gene3D" id="3.40.50.720">
    <property type="entry name" value="NAD(P)-binding Rossmann-like Domain"/>
    <property type="match status" value="1"/>
</dbReference>
<dbReference type="Gene3D" id="1.10.10.10">
    <property type="entry name" value="Winged helix-like DNA-binding domain superfamily/Winged helix DNA-binding domain"/>
    <property type="match status" value="1"/>
</dbReference>
<dbReference type="HAMAP" id="MF_01131">
    <property type="entry name" value="Rex"/>
    <property type="match status" value="1"/>
</dbReference>
<dbReference type="InterPro" id="IPR003781">
    <property type="entry name" value="CoA-bd"/>
</dbReference>
<dbReference type="InterPro" id="IPR036291">
    <property type="entry name" value="NAD(P)-bd_dom_sf"/>
</dbReference>
<dbReference type="InterPro" id="IPR009718">
    <property type="entry name" value="Rex_DNA-bd_C_dom"/>
</dbReference>
<dbReference type="InterPro" id="IPR022876">
    <property type="entry name" value="Tscrpt_rep_Rex"/>
</dbReference>
<dbReference type="InterPro" id="IPR036388">
    <property type="entry name" value="WH-like_DNA-bd_sf"/>
</dbReference>
<dbReference type="InterPro" id="IPR036390">
    <property type="entry name" value="WH_DNA-bd_sf"/>
</dbReference>
<dbReference type="NCBIfam" id="NF003988">
    <property type="entry name" value="PRK05472.1-1"/>
    <property type="match status" value="1"/>
</dbReference>
<dbReference type="NCBIfam" id="NF003989">
    <property type="entry name" value="PRK05472.1-3"/>
    <property type="match status" value="1"/>
</dbReference>
<dbReference type="NCBIfam" id="NF003991">
    <property type="entry name" value="PRK05472.1-5"/>
    <property type="match status" value="1"/>
</dbReference>
<dbReference type="NCBIfam" id="NF003994">
    <property type="entry name" value="PRK05472.2-3"/>
    <property type="match status" value="1"/>
</dbReference>
<dbReference type="NCBIfam" id="NF003995">
    <property type="entry name" value="PRK05472.2-4"/>
    <property type="match status" value="1"/>
</dbReference>
<dbReference type="NCBIfam" id="NF003996">
    <property type="entry name" value="PRK05472.2-5"/>
    <property type="match status" value="1"/>
</dbReference>
<dbReference type="PANTHER" id="PTHR35786">
    <property type="entry name" value="REDOX-SENSING TRANSCRIPTIONAL REPRESSOR REX"/>
    <property type="match status" value="1"/>
</dbReference>
<dbReference type="PANTHER" id="PTHR35786:SF1">
    <property type="entry name" value="REDOX-SENSING TRANSCRIPTIONAL REPRESSOR REX 1"/>
    <property type="match status" value="1"/>
</dbReference>
<dbReference type="Pfam" id="PF02629">
    <property type="entry name" value="CoA_binding"/>
    <property type="match status" value="1"/>
</dbReference>
<dbReference type="Pfam" id="PF06971">
    <property type="entry name" value="Put_DNA-bind_N"/>
    <property type="match status" value="1"/>
</dbReference>
<dbReference type="SMART" id="SM00881">
    <property type="entry name" value="CoA_binding"/>
    <property type="match status" value="1"/>
</dbReference>
<dbReference type="SUPFAM" id="SSF51735">
    <property type="entry name" value="NAD(P)-binding Rossmann-fold domains"/>
    <property type="match status" value="1"/>
</dbReference>
<dbReference type="SUPFAM" id="SSF46785">
    <property type="entry name" value="Winged helix' DNA-binding domain"/>
    <property type="match status" value="1"/>
</dbReference>
<proteinExistence type="inferred from homology"/>
<comment type="function">
    <text evidence="1">Modulates transcription in response to changes in cellular NADH/NAD(+) redox state.</text>
</comment>
<comment type="subunit">
    <text evidence="1">Homodimer.</text>
</comment>
<comment type="subcellular location">
    <subcellularLocation>
        <location evidence="1">Cytoplasm</location>
    </subcellularLocation>
</comment>
<comment type="similarity">
    <text evidence="1">Belongs to the transcriptional regulatory Rex family.</text>
</comment>
<reference key="1">
    <citation type="journal article" date="2008" name="J. Bacteriol.">
        <title>Genome sequence of a nephritogenic and highly transformable M49 strain of Streptococcus pyogenes.</title>
        <authorList>
            <person name="McShan W.M."/>
            <person name="Ferretti J.J."/>
            <person name="Karasawa T."/>
            <person name="Suvorov A.N."/>
            <person name="Lin S."/>
            <person name="Qin B."/>
            <person name="Jia H."/>
            <person name="Kenton S."/>
            <person name="Najar F."/>
            <person name="Wu H."/>
            <person name="Scott J."/>
            <person name="Roe B.A."/>
            <person name="Savic D.J."/>
        </authorList>
    </citation>
    <scope>NUCLEOTIDE SEQUENCE [LARGE SCALE GENOMIC DNA]</scope>
    <source>
        <strain>NZ131</strain>
    </source>
</reference>
<gene>
    <name evidence="1" type="primary">rex</name>
    <name type="ordered locus">Spy49_0872c</name>
</gene>
<keyword id="KW-0963">Cytoplasm</keyword>
<keyword id="KW-0238">DNA-binding</keyword>
<keyword id="KW-0520">NAD</keyword>
<keyword id="KW-0678">Repressor</keyword>
<keyword id="KW-0804">Transcription</keyword>
<keyword id="KW-0805">Transcription regulation</keyword>